<evidence type="ECO:0000255" key="1">
    <source>
        <dbReference type="HAMAP-Rule" id="MF_02076"/>
    </source>
</evidence>
<name>SYE_ARCFU</name>
<proteinExistence type="inferred from homology"/>
<keyword id="KW-0030">Aminoacyl-tRNA synthetase</keyword>
<keyword id="KW-0067">ATP-binding</keyword>
<keyword id="KW-0963">Cytoplasm</keyword>
<keyword id="KW-0436">Ligase</keyword>
<keyword id="KW-0547">Nucleotide-binding</keyword>
<keyword id="KW-0648">Protein biosynthesis</keyword>
<keyword id="KW-1185">Reference proteome</keyword>
<reference key="1">
    <citation type="journal article" date="1997" name="Nature">
        <title>The complete genome sequence of the hyperthermophilic, sulphate-reducing archaeon Archaeoglobus fulgidus.</title>
        <authorList>
            <person name="Klenk H.-P."/>
            <person name="Clayton R.A."/>
            <person name="Tomb J.-F."/>
            <person name="White O."/>
            <person name="Nelson K.E."/>
            <person name="Ketchum K.A."/>
            <person name="Dodson R.J."/>
            <person name="Gwinn M.L."/>
            <person name="Hickey E.K."/>
            <person name="Peterson J.D."/>
            <person name="Richardson D.L."/>
            <person name="Kerlavage A.R."/>
            <person name="Graham D.E."/>
            <person name="Kyrpides N.C."/>
            <person name="Fleischmann R.D."/>
            <person name="Quackenbush J."/>
            <person name="Lee N.H."/>
            <person name="Sutton G.G."/>
            <person name="Gill S.R."/>
            <person name="Kirkness E.F."/>
            <person name="Dougherty B.A."/>
            <person name="McKenney K."/>
            <person name="Adams M.D."/>
            <person name="Loftus B.J."/>
            <person name="Peterson S.N."/>
            <person name="Reich C.I."/>
            <person name="McNeil L.K."/>
            <person name="Badger J.H."/>
            <person name="Glodek A."/>
            <person name="Zhou L."/>
            <person name="Overbeek R."/>
            <person name="Gocayne J.D."/>
            <person name="Weidman J.F."/>
            <person name="McDonald L.A."/>
            <person name="Utterback T.R."/>
            <person name="Cotton M.D."/>
            <person name="Spriggs T."/>
            <person name="Artiach P."/>
            <person name="Kaine B.P."/>
            <person name="Sykes S.M."/>
            <person name="Sadow P.W."/>
            <person name="D'Andrea K.P."/>
            <person name="Bowman C."/>
            <person name="Fujii C."/>
            <person name="Garland S.A."/>
            <person name="Mason T.M."/>
            <person name="Olsen G.J."/>
            <person name="Fraser C.M."/>
            <person name="Smith H.O."/>
            <person name="Woese C.R."/>
            <person name="Venter J.C."/>
        </authorList>
    </citation>
    <scope>NUCLEOTIDE SEQUENCE [LARGE SCALE GENOMIC DNA]</scope>
    <source>
        <strain>ATCC 49558 / DSM 4304 / JCM 9628 / NBRC 100126 / VC-16</strain>
    </source>
</reference>
<feature type="chain" id="PRO_0000119713" description="Glutamate--tRNA ligase">
    <location>
        <begin position="1"/>
        <end position="551"/>
    </location>
</feature>
<feature type="short sequence motif" description="'HIGH' region" evidence="1">
    <location>
        <begin position="100"/>
        <end position="110"/>
    </location>
</feature>
<accession>O29979</accession>
<sequence>MKEVIMKYVVQNAAKYGKASEKAVMGKVMAENPELRKKAKEVLELVKECITEFEALSEEVRKELIKKYSMDSEAKRELETKKLPELEGAEKGKVVMRFAPNPNGPPTLGSARGIIVNGEYAKMYEGKYIIRFDDTDPRTKRPMIEAYEWYLEDIEWLGYKPDEVIYASRRIPIYYDYARKLIEMGKAYTCFCSQEEFKKFRDSGEECPHRNISVEDTLEVWERMLEGDYEEGEVVLRIKTDMRHKDPAIRDWVAFRIIKESHPLVGDKYVVYPTLDFESAIEDHLLGITHIIRGKDLIDSERRQRYIYEYFGWIYPITKHWGRVKIFEFGKLSTSSIKKDIERGKYEGWDDPRLPTLRAFRRRGFEPEAIKSFFLSLGVGENDVSVSLKNLYAENRKIIDRKANRYFFIWGPVKIEIVNLPEKKEVELPLNPHTGEKRRLKGERTIYVTKDDFERLKGQVVRLKDFCNVLLDEKAEFMGFELEGVKKGKNIIHWLPESEAIKGKVIGEREAEGLVERNAVRDVGKVVQFERFAFCKVESADEELVAVYTHP</sequence>
<gene>
    <name evidence="1" type="primary">gltX</name>
    <name type="ordered locus">AF_0260</name>
</gene>
<protein>
    <recommendedName>
        <fullName evidence="1">Glutamate--tRNA ligase</fullName>
        <ecNumber evidence="1">6.1.1.17</ecNumber>
    </recommendedName>
    <alternativeName>
        <fullName evidence="1">Glutamyl-tRNA synthetase</fullName>
        <shortName evidence="1">GluRS</shortName>
    </alternativeName>
</protein>
<comment type="function">
    <text evidence="1">Catalyzes the attachment of glutamate to tRNA(Glu) in a two-step reaction: glutamate is first activated by ATP to form Glu-AMP and then transferred to the acceptor end of tRNA(Glu).</text>
</comment>
<comment type="catalytic activity">
    <reaction evidence="1">
        <text>tRNA(Glu) + L-glutamate + ATP = L-glutamyl-tRNA(Glu) + AMP + diphosphate</text>
        <dbReference type="Rhea" id="RHEA:23540"/>
        <dbReference type="Rhea" id="RHEA-COMP:9663"/>
        <dbReference type="Rhea" id="RHEA-COMP:9680"/>
        <dbReference type="ChEBI" id="CHEBI:29985"/>
        <dbReference type="ChEBI" id="CHEBI:30616"/>
        <dbReference type="ChEBI" id="CHEBI:33019"/>
        <dbReference type="ChEBI" id="CHEBI:78442"/>
        <dbReference type="ChEBI" id="CHEBI:78520"/>
        <dbReference type="ChEBI" id="CHEBI:456215"/>
        <dbReference type="EC" id="6.1.1.17"/>
    </reaction>
</comment>
<comment type="subcellular location">
    <subcellularLocation>
        <location evidence="1">Cytoplasm</location>
    </subcellularLocation>
</comment>
<comment type="similarity">
    <text evidence="1">Belongs to the class-I aminoacyl-tRNA synthetase family. Glutamate--tRNA ligase type 2 subfamily.</text>
</comment>
<organism>
    <name type="scientific">Archaeoglobus fulgidus (strain ATCC 49558 / DSM 4304 / JCM 9628 / NBRC 100126 / VC-16)</name>
    <dbReference type="NCBI Taxonomy" id="224325"/>
    <lineage>
        <taxon>Archaea</taxon>
        <taxon>Methanobacteriati</taxon>
        <taxon>Methanobacteriota</taxon>
        <taxon>Archaeoglobi</taxon>
        <taxon>Archaeoglobales</taxon>
        <taxon>Archaeoglobaceae</taxon>
        <taxon>Archaeoglobus</taxon>
    </lineage>
</organism>
<dbReference type="EC" id="6.1.1.17" evidence="1"/>
<dbReference type="EMBL" id="AE000782">
    <property type="protein sequence ID" value="AAB90966.1"/>
    <property type="molecule type" value="Genomic_DNA"/>
</dbReference>
<dbReference type="PIR" id="D69282">
    <property type="entry name" value="D69282"/>
</dbReference>
<dbReference type="RefSeq" id="WP_010877771.1">
    <property type="nucleotide sequence ID" value="NC_000917.1"/>
</dbReference>
<dbReference type="SMR" id="O29979"/>
<dbReference type="STRING" id="224325.AF_0260"/>
<dbReference type="PaxDb" id="224325-AF_0260"/>
<dbReference type="EnsemblBacteria" id="AAB90966">
    <property type="protein sequence ID" value="AAB90966"/>
    <property type="gene ID" value="AF_0260"/>
</dbReference>
<dbReference type="GeneID" id="1483474"/>
<dbReference type="KEGG" id="afu:AF_0260"/>
<dbReference type="eggNOG" id="arCOG04302">
    <property type="taxonomic scope" value="Archaea"/>
</dbReference>
<dbReference type="HOGENOM" id="CLU_001882_1_3_2"/>
<dbReference type="OrthoDB" id="10470at2157"/>
<dbReference type="PhylomeDB" id="O29979"/>
<dbReference type="Proteomes" id="UP000002199">
    <property type="component" value="Chromosome"/>
</dbReference>
<dbReference type="GO" id="GO:0005829">
    <property type="term" value="C:cytosol"/>
    <property type="evidence" value="ECO:0007669"/>
    <property type="project" value="TreeGrafter"/>
</dbReference>
<dbReference type="GO" id="GO:0005524">
    <property type="term" value="F:ATP binding"/>
    <property type="evidence" value="ECO:0007669"/>
    <property type="project" value="UniProtKB-UniRule"/>
</dbReference>
<dbReference type="GO" id="GO:0004818">
    <property type="term" value="F:glutamate-tRNA ligase activity"/>
    <property type="evidence" value="ECO:0007669"/>
    <property type="project" value="UniProtKB-UniRule"/>
</dbReference>
<dbReference type="GO" id="GO:0043604">
    <property type="term" value="P:amide biosynthetic process"/>
    <property type="evidence" value="ECO:0007669"/>
    <property type="project" value="TreeGrafter"/>
</dbReference>
<dbReference type="GO" id="GO:0006424">
    <property type="term" value="P:glutamyl-tRNA aminoacylation"/>
    <property type="evidence" value="ECO:0007669"/>
    <property type="project" value="UniProtKB-UniRule"/>
</dbReference>
<dbReference type="CDD" id="cd09287">
    <property type="entry name" value="GluRS_non_core"/>
    <property type="match status" value="1"/>
</dbReference>
<dbReference type="FunFam" id="3.40.50.620:FF:000222">
    <property type="entry name" value="Glutamate--tRNA ligase"/>
    <property type="match status" value="1"/>
</dbReference>
<dbReference type="Gene3D" id="2.40.240.100">
    <property type="match status" value="1"/>
</dbReference>
<dbReference type="Gene3D" id="3.40.50.620">
    <property type="entry name" value="HUPs"/>
    <property type="match status" value="1"/>
</dbReference>
<dbReference type="Gene3D" id="2.40.240.10">
    <property type="entry name" value="Ribosomal Protein L25, Chain P"/>
    <property type="match status" value="1"/>
</dbReference>
<dbReference type="HAMAP" id="MF_02076">
    <property type="entry name" value="Glu_tRNA_synth_type2"/>
    <property type="match status" value="1"/>
</dbReference>
<dbReference type="InterPro" id="IPR050132">
    <property type="entry name" value="Gln/Glu-tRNA_Ligase"/>
</dbReference>
<dbReference type="InterPro" id="IPR004526">
    <property type="entry name" value="Glu-tRNA-synth_arc/euk"/>
</dbReference>
<dbReference type="InterPro" id="IPR000924">
    <property type="entry name" value="Glu/Gln-tRNA-synth"/>
</dbReference>
<dbReference type="InterPro" id="IPR020058">
    <property type="entry name" value="Glu/Gln-tRNA-synth_Ib_cat-dom"/>
</dbReference>
<dbReference type="InterPro" id="IPR020059">
    <property type="entry name" value="Glu/Gln-tRNA-synth_Ib_codon-bd"/>
</dbReference>
<dbReference type="InterPro" id="IPR020056">
    <property type="entry name" value="Rbsml_bL25/Gln-tRNA_synth_N"/>
</dbReference>
<dbReference type="InterPro" id="IPR011035">
    <property type="entry name" value="Ribosomal_bL25/Gln-tRNA_synth"/>
</dbReference>
<dbReference type="InterPro" id="IPR014729">
    <property type="entry name" value="Rossmann-like_a/b/a_fold"/>
</dbReference>
<dbReference type="NCBIfam" id="TIGR00463">
    <property type="entry name" value="gltX_arch"/>
    <property type="match status" value="1"/>
</dbReference>
<dbReference type="NCBIfam" id="NF003169">
    <property type="entry name" value="PRK04156.1"/>
    <property type="match status" value="1"/>
</dbReference>
<dbReference type="PANTHER" id="PTHR43097:SF5">
    <property type="entry name" value="GLUTAMATE--TRNA LIGASE"/>
    <property type="match status" value="1"/>
</dbReference>
<dbReference type="PANTHER" id="PTHR43097">
    <property type="entry name" value="GLUTAMINE-TRNA LIGASE"/>
    <property type="match status" value="1"/>
</dbReference>
<dbReference type="Pfam" id="PF00749">
    <property type="entry name" value="tRNA-synt_1c"/>
    <property type="match status" value="1"/>
</dbReference>
<dbReference type="Pfam" id="PF03950">
    <property type="entry name" value="tRNA-synt_1c_C"/>
    <property type="match status" value="1"/>
</dbReference>
<dbReference type="PRINTS" id="PR00987">
    <property type="entry name" value="TRNASYNTHGLU"/>
</dbReference>
<dbReference type="SUPFAM" id="SSF52374">
    <property type="entry name" value="Nucleotidylyl transferase"/>
    <property type="match status" value="1"/>
</dbReference>
<dbReference type="SUPFAM" id="SSF50715">
    <property type="entry name" value="Ribosomal protein L25-like"/>
    <property type="match status" value="1"/>
</dbReference>